<feature type="chain" id="PRO_1000121063" description="Beta-hexosaminidase">
    <location>
        <begin position="1"/>
        <end position="340"/>
    </location>
</feature>
<feature type="active site" description="Proton donor/acceptor" evidence="1">
    <location>
        <position position="176"/>
    </location>
</feature>
<feature type="active site" description="Nucleophile" evidence="1">
    <location>
        <position position="248"/>
    </location>
</feature>
<feature type="binding site" evidence="1">
    <location>
        <position position="62"/>
    </location>
    <ligand>
        <name>substrate</name>
    </ligand>
</feature>
<feature type="binding site" evidence="1">
    <location>
        <position position="70"/>
    </location>
    <ligand>
        <name>substrate</name>
    </ligand>
</feature>
<feature type="binding site" evidence="1">
    <location>
        <position position="133"/>
    </location>
    <ligand>
        <name>substrate</name>
    </ligand>
</feature>
<feature type="binding site" evidence="1">
    <location>
        <begin position="163"/>
        <end position="164"/>
    </location>
    <ligand>
        <name>substrate</name>
    </ligand>
</feature>
<feature type="site" description="Important for catalytic activity" evidence="1">
    <location>
        <position position="174"/>
    </location>
</feature>
<protein>
    <recommendedName>
        <fullName evidence="1">Beta-hexosaminidase</fullName>
        <ecNumber evidence="1">3.2.1.52</ecNumber>
    </recommendedName>
    <alternativeName>
        <fullName evidence="1">Beta-N-acetylhexosaminidase</fullName>
    </alternativeName>
    <alternativeName>
        <fullName evidence="1">N-acetyl-beta-glucosaminidase</fullName>
    </alternativeName>
</protein>
<comment type="function">
    <text evidence="1">Plays a role in peptidoglycan recycling by cleaving the terminal beta-1,4-linked N-acetylglucosamine (GlcNAc) from peptide-linked peptidoglycan fragments, giving rise to free GlcNAc, anhydro-N-acetylmuramic acid and anhydro-N-acetylmuramic acid-linked peptides.</text>
</comment>
<comment type="catalytic activity">
    <reaction evidence="1">
        <text>Hydrolysis of terminal non-reducing N-acetyl-D-hexosamine residues in N-acetyl-beta-D-hexosaminides.</text>
        <dbReference type="EC" id="3.2.1.52"/>
    </reaction>
</comment>
<comment type="pathway">
    <text evidence="1">Cell wall biogenesis; peptidoglycan recycling.</text>
</comment>
<comment type="subcellular location">
    <subcellularLocation>
        <location evidence="1">Cytoplasm</location>
    </subcellularLocation>
</comment>
<comment type="similarity">
    <text evidence="1">Belongs to the glycosyl hydrolase 3 family. NagZ subfamily.</text>
</comment>
<name>NAGZ_KLEP3</name>
<sequence>MGPVMLDVEGYELDAEEREILAHPLVGGLILFTRNYHDPAQLRELVRQIRDASRNHLVVAVDQEGGRVQRFREGFTRLPAAQSFAALLGMEEGGKLAAEAGWLMASEMIAMDIDISFAPVLDVGHISAAIGERSYHEDPQKALTMARHFIDGMHAAGMKTTGKHFPGHGAVTADSHKETPFDPRPASVIRDHDMAVFKSLIAEQRLDAIMPAHVIYPELDPRPASGSAYWLKTVLRGELGFDGVIFSDDLSMEGAAIMGSYAERGQASLDAGCDMILVCNNRKGAVSVLDNLSPIKAERVTKLYHKGSFSRQELRDSARWKTVSAQLEQLHARWQEAKSA</sequence>
<evidence type="ECO:0000255" key="1">
    <source>
        <dbReference type="HAMAP-Rule" id="MF_00364"/>
    </source>
</evidence>
<reference key="1">
    <citation type="journal article" date="2008" name="PLoS Genet.">
        <title>Complete genome sequence of the N2-fixing broad host range endophyte Klebsiella pneumoniae 342 and virulence predictions verified in mice.</title>
        <authorList>
            <person name="Fouts D.E."/>
            <person name="Tyler H.L."/>
            <person name="DeBoy R.T."/>
            <person name="Daugherty S."/>
            <person name="Ren Q."/>
            <person name="Badger J.H."/>
            <person name="Durkin A.S."/>
            <person name="Huot H."/>
            <person name="Shrivastava S."/>
            <person name="Kothari S."/>
            <person name="Dodson R.J."/>
            <person name="Mohamoud Y."/>
            <person name="Khouri H."/>
            <person name="Roesch L.F.W."/>
            <person name="Krogfelt K.A."/>
            <person name="Struve C."/>
            <person name="Triplett E.W."/>
            <person name="Methe B.A."/>
        </authorList>
    </citation>
    <scope>NUCLEOTIDE SEQUENCE [LARGE SCALE GENOMIC DNA]</scope>
    <source>
        <strain>342</strain>
    </source>
</reference>
<accession>B5XXG4</accession>
<organism>
    <name type="scientific">Klebsiella pneumoniae (strain 342)</name>
    <dbReference type="NCBI Taxonomy" id="507522"/>
    <lineage>
        <taxon>Bacteria</taxon>
        <taxon>Pseudomonadati</taxon>
        <taxon>Pseudomonadota</taxon>
        <taxon>Gammaproteobacteria</taxon>
        <taxon>Enterobacterales</taxon>
        <taxon>Enterobacteriaceae</taxon>
        <taxon>Klebsiella/Raoultella group</taxon>
        <taxon>Klebsiella</taxon>
        <taxon>Klebsiella pneumoniae complex</taxon>
    </lineage>
</organism>
<dbReference type="EC" id="3.2.1.52" evidence="1"/>
<dbReference type="EMBL" id="CP000964">
    <property type="protein sequence ID" value="ACI07330.1"/>
    <property type="molecule type" value="Genomic_DNA"/>
</dbReference>
<dbReference type="SMR" id="B5XXG4"/>
<dbReference type="CAZy" id="GH3">
    <property type="family name" value="Glycoside Hydrolase Family 3"/>
</dbReference>
<dbReference type="KEGG" id="kpe:KPK_3452"/>
<dbReference type="HOGENOM" id="CLU_008392_0_0_6"/>
<dbReference type="UniPathway" id="UPA00544"/>
<dbReference type="Proteomes" id="UP000001734">
    <property type="component" value="Chromosome"/>
</dbReference>
<dbReference type="GO" id="GO:0005737">
    <property type="term" value="C:cytoplasm"/>
    <property type="evidence" value="ECO:0007669"/>
    <property type="project" value="UniProtKB-SubCell"/>
</dbReference>
<dbReference type="GO" id="GO:0004563">
    <property type="term" value="F:beta-N-acetylhexosaminidase activity"/>
    <property type="evidence" value="ECO:0007669"/>
    <property type="project" value="UniProtKB-UniRule"/>
</dbReference>
<dbReference type="GO" id="GO:0005975">
    <property type="term" value="P:carbohydrate metabolic process"/>
    <property type="evidence" value="ECO:0007669"/>
    <property type="project" value="InterPro"/>
</dbReference>
<dbReference type="GO" id="GO:0051301">
    <property type="term" value="P:cell division"/>
    <property type="evidence" value="ECO:0007669"/>
    <property type="project" value="UniProtKB-KW"/>
</dbReference>
<dbReference type="GO" id="GO:0071555">
    <property type="term" value="P:cell wall organization"/>
    <property type="evidence" value="ECO:0007669"/>
    <property type="project" value="UniProtKB-KW"/>
</dbReference>
<dbReference type="GO" id="GO:0009252">
    <property type="term" value="P:peptidoglycan biosynthetic process"/>
    <property type="evidence" value="ECO:0007669"/>
    <property type="project" value="UniProtKB-KW"/>
</dbReference>
<dbReference type="GO" id="GO:0009254">
    <property type="term" value="P:peptidoglycan turnover"/>
    <property type="evidence" value="ECO:0007669"/>
    <property type="project" value="UniProtKB-UniRule"/>
</dbReference>
<dbReference type="GO" id="GO:0008360">
    <property type="term" value="P:regulation of cell shape"/>
    <property type="evidence" value="ECO:0007669"/>
    <property type="project" value="UniProtKB-KW"/>
</dbReference>
<dbReference type="FunFam" id="3.20.20.300:FF:000001">
    <property type="entry name" value="Beta-hexosaminidase"/>
    <property type="match status" value="1"/>
</dbReference>
<dbReference type="Gene3D" id="3.20.20.300">
    <property type="entry name" value="Glycoside hydrolase, family 3, N-terminal domain"/>
    <property type="match status" value="1"/>
</dbReference>
<dbReference type="HAMAP" id="MF_00364">
    <property type="entry name" value="NagZ"/>
    <property type="match status" value="1"/>
</dbReference>
<dbReference type="InterPro" id="IPR022956">
    <property type="entry name" value="Beta_hexosaminidase_bac"/>
</dbReference>
<dbReference type="InterPro" id="IPR019800">
    <property type="entry name" value="Glyco_hydro_3_AS"/>
</dbReference>
<dbReference type="InterPro" id="IPR001764">
    <property type="entry name" value="Glyco_hydro_3_N"/>
</dbReference>
<dbReference type="InterPro" id="IPR036962">
    <property type="entry name" value="Glyco_hydro_3_N_sf"/>
</dbReference>
<dbReference type="InterPro" id="IPR017853">
    <property type="entry name" value="Glycoside_hydrolase_SF"/>
</dbReference>
<dbReference type="InterPro" id="IPR050226">
    <property type="entry name" value="NagZ_Beta-hexosaminidase"/>
</dbReference>
<dbReference type="NCBIfam" id="NF003740">
    <property type="entry name" value="PRK05337.1"/>
    <property type="match status" value="1"/>
</dbReference>
<dbReference type="PANTHER" id="PTHR30480:SF13">
    <property type="entry name" value="BETA-HEXOSAMINIDASE"/>
    <property type="match status" value="1"/>
</dbReference>
<dbReference type="PANTHER" id="PTHR30480">
    <property type="entry name" value="BETA-HEXOSAMINIDASE-RELATED"/>
    <property type="match status" value="1"/>
</dbReference>
<dbReference type="Pfam" id="PF00933">
    <property type="entry name" value="Glyco_hydro_3"/>
    <property type="match status" value="1"/>
</dbReference>
<dbReference type="SUPFAM" id="SSF51445">
    <property type="entry name" value="(Trans)glycosidases"/>
    <property type="match status" value="1"/>
</dbReference>
<dbReference type="PROSITE" id="PS00775">
    <property type="entry name" value="GLYCOSYL_HYDROL_F3"/>
    <property type="match status" value="1"/>
</dbReference>
<keyword id="KW-0131">Cell cycle</keyword>
<keyword id="KW-0132">Cell division</keyword>
<keyword id="KW-0133">Cell shape</keyword>
<keyword id="KW-0961">Cell wall biogenesis/degradation</keyword>
<keyword id="KW-0963">Cytoplasm</keyword>
<keyword id="KW-0326">Glycosidase</keyword>
<keyword id="KW-0378">Hydrolase</keyword>
<keyword id="KW-0573">Peptidoglycan synthesis</keyword>
<proteinExistence type="inferred from homology"/>
<gene>
    <name evidence="1" type="primary">nagZ</name>
    <name type="ordered locus">KPK_3452</name>
</gene>